<accession>A7MS57</accession>
<sequence length="176" mass="20044">MSKKDTEHDDDFALFKDAVQGVKKLRQDTIIQQPKKNTKQKEITRSNREASDSEFYFSDEFVPLLNADGPTRYARDDVSTYEVKRLRRGVYVPDVFLDMHGMTQQEAKRELGAMIAYCVKNEIHCACVQHGIGKHILKQKAPLWLAQHPDVMAFHQAPLEFGGDGALLVLLSIPEK</sequence>
<reference key="1">
    <citation type="submission" date="2007-08" db="EMBL/GenBank/DDBJ databases">
        <authorList>
            <consortium name="The Vibrio harveyi Genome Sequencing Project"/>
            <person name="Bassler B."/>
            <person name="Clifton S.W."/>
            <person name="Fulton L."/>
            <person name="Delehaunty K."/>
            <person name="Fronick C."/>
            <person name="Harrison M."/>
            <person name="Markivic C."/>
            <person name="Fulton R."/>
            <person name="Tin-Wollam A.-M."/>
            <person name="Shah N."/>
            <person name="Pepin K."/>
            <person name="Nash W."/>
            <person name="Thiruvilangam P."/>
            <person name="Bhonagiri V."/>
            <person name="Waters C."/>
            <person name="Tu K.C."/>
            <person name="Irgon J."/>
            <person name="Wilson R.K."/>
        </authorList>
    </citation>
    <scope>NUCLEOTIDE SEQUENCE [LARGE SCALE GENOMIC DNA]</scope>
    <source>
        <strain>ATCC BAA-1116 / BB120</strain>
    </source>
</reference>
<gene>
    <name evidence="1" type="primary">smrB</name>
    <name type="ordered locus">VIBHAR_03116</name>
</gene>
<keyword id="KW-0255">Endonuclease</keyword>
<keyword id="KW-0378">Hydrolase</keyword>
<keyword id="KW-0540">Nuclease</keyword>
<keyword id="KW-0694">RNA-binding</keyword>
<keyword id="KW-0699">rRNA-binding</keyword>
<protein>
    <recommendedName>
        <fullName evidence="1">Ribosome rescue factor SmrB</fullName>
        <ecNumber evidence="1">3.1.-.-</ecNumber>
    </recommendedName>
</protein>
<comment type="function">
    <text evidence="1">Acts as a ribosome collision sensor. Detects stalled/collided disomes (pairs of ribosomes where the leading ribosome is stalled and a second ribosome has collided with it) and endonucleolytically cleaves mRNA at the 5' boundary of the stalled ribosome. Stalled/collided disomes form a new interface (primarily via the 30S subunits) that binds SmrB. Cleaved mRNA becomes available for tmRNA ligation, leading to ribosomal subunit dissociation and rescue of stalled ribosomes.</text>
</comment>
<comment type="subunit">
    <text evidence="1">Associates with collided ribosomes, but not with correctly translating polysomes.</text>
</comment>
<comment type="similarity">
    <text evidence="1">Belongs to the SmrB family.</text>
</comment>
<name>SMRB_VIBC1</name>
<proteinExistence type="inferred from homology"/>
<organism>
    <name type="scientific">Vibrio campbellii (strain ATCC BAA-1116)</name>
    <dbReference type="NCBI Taxonomy" id="2902295"/>
    <lineage>
        <taxon>Bacteria</taxon>
        <taxon>Pseudomonadati</taxon>
        <taxon>Pseudomonadota</taxon>
        <taxon>Gammaproteobacteria</taxon>
        <taxon>Vibrionales</taxon>
        <taxon>Vibrionaceae</taxon>
        <taxon>Vibrio</taxon>
    </lineage>
</organism>
<evidence type="ECO:0000255" key="1">
    <source>
        <dbReference type="HAMAP-Rule" id="MF_01042"/>
    </source>
</evidence>
<dbReference type="EC" id="3.1.-.-" evidence="1"/>
<dbReference type="EMBL" id="CP000789">
    <property type="protein sequence ID" value="ABU72065.1"/>
    <property type="molecule type" value="Genomic_DNA"/>
</dbReference>
<dbReference type="RefSeq" id="WP_005433105.1">
    <property type="nucleotide sequence ID" value="NC_022269.1"/>
</dbReference>
<dbReference type="SMR" id="A7MS57"/>
<dbReference type="GeneID" id="67376634"/>
<dbReference type="KEGG" id="vha:VIBHAR_03116"/>
<dbReference type="PATRIC" id="fig|338187.25.peg.3074"/>
<dbReference type="Proteomes" id="UP000008152">
    <property type="component" value="Chromosome I"/>
</dbReference>
<dbReference type="GO" id="GO:0004521">
    <property type="term" value="F:RNA endonuclease activity"/>
    <property type="evidence" value="ECO:0007669"/>
    <property type="project" value="UniProtKB-UniRule"/>
</dbReference>
<dbReference type="GO" id="GO:0019843">
    <property type="term" value="F:rRNA binding"/>
    <property type="evidence" value="ECO:0007669"/>
    <property type="project" value="UniProtKB-UniRule"/>
</dbReference>
<dbReference type="GO" id="GO:0072344">
    <property type="term" value="P:rescue of stalled ribosome"/>
    <property type="evidence" value="ECO:0007669"/>
    <property type="project" value="UniProtKB-UniRule"/>
</dbReference>
<dbReference type="Gene3D" id="3.30.1370.110">
    <property type="match status" value="1"/>
</dbReference>
<dbReference type="HAMAP" id="MF_01042">
    <property type="entry name" value="SmrB"/>
    <property type="match status" value="1"/>
</dbReference>
<dbReference type="InterPro" id="IPR002625">
    <property type="entry name" value="Smr_dom"/>
</dbReference>
<dbReference type="InterPro" id="IPR036063">
    <property type="entry name" value="Smr_dom_sf"/>
</dbReference>
<dbReference type="InterPro" id="IPR022990">
    <property type="entry name" value="SmrB-like"/>
</dbReference>
<dbReference type="NCBIfam" id="NF003432">
    <property type="entry name" value="PRK04946.1"/>
    <property type="match status" value="1"/>
</dbReference>
<dbReference type="PANTHER" id="PTHR35562">
    <property type="entry name" value="DNA ENDONUCLEASE SMRA-RELATED"/>
    <property type="match status" value="1"/>
</dbReference>
<dbReference type="PANTHER" id="PTHR35562:SF1">
    <property type="entry name" value="UPF0115 PROTEIN YFCN"/>
    <property type="match status" value="1"/>
</dbReference>
<dbReference type="Pfam" id="PF01713">
    <property type="entry name" value="Smr"/>
    <property type="match status" value="1"/>
</dbReference>
<dbReference type="SMART" id="SM00463">
    <property type="entry name" value="SMR"/>
    <property type="match status" value="1"/>
</dbReference>
<dbReference type="SUPFAM" id="SSF160443">
    <property type="entry name" value="SMR domain-like"/>
    <property type="match status" value="1"/>
</dbReference>
<dbReference type="PROSITE" id="PS50828">
    <property type="entry name" value="SMR"/>
    <property type="match status" value="1"/>
</dbReference>
<feature type="chain" id="PRO_1000084370" description="Ribosome rescue factor SmrB">
    <location>
        <begin position="1"/>
        <end position="176"/>
    </location>
</feature>
<feature type="domain" description="Smr" evidence="1">
    <location>
        <begin position="97"/>
        <end position="172"/>
    </location>
</feature>